<keyword id="KW-0903">Direct protein sequencing</keyword>
<keyword id="KW-0249">Electron transport</keyword>
<keyword id="KW-0349">Heme</keyword>
<keyword id="KW-0408">Iron</keyword>
<keyword id="KW-0479">Metal-binding</keyword>
<keyword id="KW-0496">Mitochondrion</keyword>
<keyword id="KW-0679">Respiratory chain</keyword>
<keyword id="KW-0813">Transport</keyword>
<proteinExistence type="evidence at protein level"/>
<sequence length="93" mass="9833">AALPPGDAAAAQGGSNGVGPNLYGIVGRKSGTVEGFTYSKANQDSGVMWTPQVLDVYLENPKKFMPGTKMSFAGLKKPQERADLIAYLETLKD</sequence>
<protein>
    <recommendedName>
        <fullName>Cytochrome c</fullName>
    </recommendedName>
</protein>
<organism>
    <name type="scientific">Trypanosoma brucei brucei</name>
    <dbReference type="NCBI Taxonomy" id="5702"/>
    <lineage>
        <taxon>Eukaryota</taxon>
        <taxon>Discoba</taxon>
        <taxon>Euglenozoa</taxon>
        <taxon>Kinetoplastea</taxon>
        <taxon>Metakinetoplastina</taxon>
        <taxon>Trypanosomatida</taxon>
        <taxon>Trypanosomatidae</taxon>
        <taxon>Trypanosoma</taxon>
    </lineage>
</organism>
<dbReference type="EMBL" id="M23360">
    <property type="protein sequence ID" value="AAA30178.1"/>
    <property type="molecule type" value="mRNA"/>
</dbReference>
<dbReference type="PIR" id="B31558">
    <property type="entry name" value="A31558"/>
</dbReference>
<dbReference type="SMR" id="P18822"/>
<dbReference type="GO" id="GO:0005758">
    <property type="term" value="C:mitochondrial intermembrane space"/>
    <property type="evidence" value="ECO:0007669"/>
    <property type="project" value="UniProtKB-SubCell"/>
</dbReference>
<dbReference type="GO" id="GO:0009055">
    <property type="term" value="F:electron transfer activity"/>
    <property type="evidence" value="ECO:0007669"/>
    <property type="project" value="InterPro"/>
</dbReference>
<dbReference type="GO" id="GO:0020037">
    <property type="term" value="F:heme binding"/>
    <property type="evidence" value="ECO:0007669"/>
    <property type="project" value="InterPro"/>
</dbReference>
<dbReference type="GO" id="GO:0046872">
    <property type="term" value="F:metal ion binding"/>
    <property type="evidence" value="ECO:0007669"/>
    <property type="project" value="UniProtKB-KW"/>
</dbReference>
<dbReference type="Gene3D" id="1.10.760.10">
    <property type="entry name" value="Cytochrome c-like domain"/>
    <property type="match status" value="1"/>
</dbReference>
<dbReference type="InterPro" id="IPR009056">
    <property type="entry name" value="Cyt_c-like_dom"/>
</dbReference>
<dbReference type="InterPro" id="IPR036909">
    <property type="entry name" value="Cyt_c-like_dom_sf"/>
</dbReference>
<dbReference type="InterPro" id="IPR002327">
    <property type="entry name" value="Cyt_c_1A/1B"/>
</dbReference>
<dbReference type="PANTHER" id="PTHR11961">
    <property type="entry name" value="CYTOCHROME C"/>
    <property type="match status" value="1"/>
</dbReference>
<dbReference type="Pfam" id="PF00034">
    <property type="entry name" value="Cytochrom_C"/>
    <property type="match status" value="1"/>
</dbReference>
<dbReference type="PRINTS" id="PR00604">
    <property type="entry name" value="CYTCHRMECIAB"/>
</dbReference>
<dbReference type="SUPFAM" id="SSF46626">
    <property type="entry name" value="Cytochrome c"/>
    <property type="match status" value="1"/>
</dbReference>
<dbReference type="PROSITE" id="PS51007">
    <property type="entry name" value="CYTC"/>
    <property type="match status" value="1"/>
</dbReference>
<reference key="1">
    <citation type="journal article" date="1988" name="Mol. Cell. Biol.">
        <title>Posttranscriptional regulation of cytochrome c expression during the developmental cycle of Trypanosoma brucei.</title>
        <authorList>
            <person name="Torri A.F."/>
            <person name="Hajduk S.L."/>
        </authorList>
    </citation>
    <scope>NUCLEOTIDE SEQUENCE [MRNA] OF 25-93</scope>
    <scope>PROTEIN SEQUENCE OF 1-24</scope>
</reference>
<evidence type="ECO:0000256" key="1">
    <source>
        <dbReference type="SAM" id="MobiDB-lite"/>
    </source>
</evidence>
<evidence type="ECO:0000305" key="2"/>
<accession>P18822</accession>
<comment type="function">
    <text>Electron carrier protein. The oxidized form of the cytochrome c heme group can accept an electron from the heme group of the cytochrome c1 subunit of cytochrome reductase. Cytochrome c then transfers this electron to the cytochrome oxidase complex, the final protein carrier in the mitochondrial electron-transport chain.</text>
</comment>
<comment type="subcellular location">
    <subcellularLocation>
        <location>Mitochondrion intermembrane space</location>
    </subcellularLocation>
    <text>Loosely associated with the inner membrane.</text>
</comment>
<comment type="PTM">
    <text>Binds 1 heme c group covalently per subunit.</text>
</comment>
<comment type="similarity">
    <text evidence="2">Belongs to the cytochrome c family.</text>
</comment>
<comment type="online information" name="Protein Spotlight">
    <link uri="https://www.proteinspotlight.org/back_issues/076"/>
    <text>Life shuttle - Issue 76 of November 2006</text>
</comment>
<name>CYC_TRYBB</name>
<feature type="chain" id="PRO_0000108280" description="Cytochrome c">
    <location>
        <begin position="1" status="less than"/>
        <end position="93" status="greater than"/>
    </location>
</feature>
<feature type="region of interest" description="Disordered" evidence="1">
    <location>
        <begin position="1"/>
        <end position="21"/>
    </location>
</feature>
<feature type="compositionally biased region" description="Low complexity" evidence="1">
    <location>
        <begin position="1"/>
        <end position="13"/>
    </location>
</feature>
<feature type="binding site" description="axial binding residue">
    <location>
        <position position="70"/>
    </location>
    <ligand>
        <name>heme c</name>
        <dbReference type="ChEBI" id="CHEBI:61717"/>
    </ligand>
    <ligandPart>
        <name>Fe</name>
        <dbReference type="ChEBI" id="CHEBI:18248"/>
    </ligandPart>
</feature>
<feature type="non-consecutive residues" evidence="2">
    <location>
        <begin position="9"/>
        <end position="10"/>
    </location>
</feature>
<feature type="non-consecutive residues" evidence="2">
    <location>
        <begin position="12"/>
        <end position="13"/>
    </location>
</feature>
<feature type="non-terminal residue">
    <location>
        <position position="1"/>
    </location>
</feature>
<feature type="non-terminal residue">
    <location>
        <position position="93"/>
    </location>
</feature>